<proteinExistence type="predicted"/>
<evidence type="ECO:0000255" key="1">
    <source>
        <dbReference type="PROSITE-ProRule" id="PRU00080"/>
    </source>
</evidence>
<gene>
    <name type="ordered locus">At5g56810</name>
    <name type="ORF">MIK19.28</name>
</gene>
<sequence length="435" mass="49153">MEAARSGIEDVTSPDRISQLPNDLLFRILSLIPVSDAMSTSLLSKRWKSVWKMLPTLVYNENSCSNIGSLGFDQFCGRSLQLHEAPLLKTLTLELRKQTDSLDSSIFPNIHSTLLEFSIKSTGYPVYYSTISFPNNLDVFQTLVVLKLQGNICLDVVDSPVCFQSLKSLYLTCVNFENEESFSKLLSACPVLEDLFLQRLCSVGRFLFSISVPSLQRLTYTKEQAYYSNDEAILEITAPSLKHLNIFDRVGVFSFIEDMPKLVEASVRVKLSKNEKLPKVLTSVEHLSLDLYPSMVFHLDDRFISKQLLHLKLDIYDNFQSNLLLSLLKDLPNLQSLKLNHSHPSYNVEDQPCSVSEPSSVPECLSFHLETFQWIGYAGTFEEIAAAVYVLKNARCLKNATISLYSRGTENGLMMIKELESMSKGSIMCQLLVKF</sequence>
<dbReference type="EMBL" id="AB013392">
    <property type="protein sequence ID" value="BAB09899.1"/>
    <property type="molecule type" value="Genomic_DNA"/>
</dbReference>
<dbReference type="EMBL" id="CP002688">
    <property type="protein sequence ID" value="AED96810.1"/>
    <property type="molecule type" value="Genomic_DNA"/>
</dbReference>
<dbReference type="RefSeq" id="NP_200492.1">
    <property type="nucleotide sequence ID" value="NM_125064.2"/>
</dbReference>
<dbReference type="STRING" id="3702.Q9FJT2"/>
<dbReference type="MetOSite" id="Q9FJT2"/>
<dbReference type="PaxDb" id="3702-AT5G56810.1"/>
<dbReference type="EnsemblPlants" id="AT5G56810.1">
    <property type="protein sequence ID" value="AT5G56810.1"/>
    <property type="gene ID" value="AT5G56810"/>
</dbReference>
<dbReference type="GeneID" id="835783"/>
<dbReference type="Gramene" id="AT5G56810.1">
    <property type="protein sequence ID" value="AT5G56810.1"/>
    <property type="gene ID" value="AT5G56810"/>
</dbReference>
<dbReference type="KEGG" id="ath:AT5G56810"/>
<dbReference type="Araport" id="AT5G56810"/>
<dbReference type="TAIR" id="AT5G56810"/>
<dbReference type="eggNOG" id="ENOG502RRA7">
    <property type="taxonomic scope" value="Eukaryota"/>
</dbReference>
<dbReference type="HOGENOM" id="CLU_010721_1_2_1"/>
<dbReference type="InParanoid" id="Q9FJT2"/>
<dbReference type="OMA" id="LYPSMVF"/>
<dbReference type="OrthoDB" id="1041004at2759"/>
<dbReference type="PhylomeDB" id="Q9FJT2"/>
<dbReference type="PRO" id="PR:Q9FJT2"/>
<dbReference type="Proteomes" id="UP000006548">
    <property type="component" value="Chromosome 5"/>
</dbReference>
<dbReference type="ExpressionAtlas" id="Q9FJT2">
    <property type="expression patterns" value="baseline and differential"/>
</dbReference>
<dbReference type="CDD" id="cd22160">
    <property type="entry name" value="F-box_AtFBL13-like"/>
    <property type="match status" value="1"/>
</dbReference>
<dbReference type="Gene3D" id="3.80.10.10">
    <property type="entry name" value="Ribonuclease Inhibitor"/>
    <property type="match status" value="1"/>
</dbReference>
<dbReference type="InterPro" id="IPR036047">
    <property type="entry name" value="F-box-like_dom_sf"/>
</dbReference>
<dbReference type="InterPro" id="IPR053781">
    <property type="entry name" value="F-box_AtFBL13-like"/>
</dbReference>
<dbReference type="InterPro" id="IPR001810">
    <property type="entry name" value="F-box_dom"/>
</dbReference>
<dbReference type="InterPro" id="IPR006566">
    <property type="entry name" value="FBD"/>
</dbReference>
<dbReference type="InterPro" id="IPR050232">
    <property type="entry name" value="FBL13/AtMIF1-like"/>
</dbReference>
<dbReference type="InterPro" id="IPR032675">
    <property type="entry name" value="LRR_dom_sf"/>
</dbReference>
<dbReference type="InterPro" id="IPR055411">
    <property type="entry name" value="LRR_FXL15/At3g58940/PEG3-like"/>
</dbReference>
<dbReference type="PANTHER" id="PTHR31900">
    <property type="entry name" value="F-BOX/RNI SUPERFAMILY PROTEIN-RELATED"/>
    <property type="match status" value="1"/>
</dbReference>
<dbReference type="PANTHER" id="PTHR31900:SF28">
    <property type="entry name" value="FBD DOMAIN-CONTAINING PROTEIN"/>
    <property type="match status" value="1"/>
</dbReference>
<dbReference type="Pfam" id="PF00646">
    <property type="entry name" value="F-box"/>
    <property type="match status" value="1"/>
</dbReference>
<dbReference type="Pfam" id="PF08387">
    <property type="entry name" value="FBD"/>
    <property type="match status" value="1"/>
</dbReference>
<dbReference type="Pfam" id="PF24758">
    <property type="entry name" value="LRR_At5g56370"/>
    <property type="match status" value="1"/>
</dbReference>
<dbReference type="SMART" id="SM00579">
    <property type="entry name" value="FBD"/>
    <property type="match status" value="1"/>
</dbReference>
<dbReference type="SMART" id="SM00256">
    <property type="entry name" value="FBOX"/>
    <property type="match status" value="1"/>
</dbReference>
<dbReference type="SUPFAM" id="SSF81383">
    <property type="entry name" value="F-box domain"/>
    <property type="match status" value="1"/>
</dbReference>
<dbReference type="SUPFAM" id="SSF52047">
    <property type="entry name" value="RNI-like"/>
    <property type="match status" value="1"/>
</dbReference>
<dbReference type="PROSITE" id="PS50181">
    <property type="entry name" value="FBOX"/>
    <property type="match status" value="1"/>
</dbReference>
<keyword id="KW-0433">Leucine-rich repeat</keyword>
<keyword id="KW-1185">Reference proteome</keyword>
<keyword id="KW-0677">Repeat</keyword>
<reference key="1">
    <citation type="journal article" date="1998" name="DNA Res.">
        <title>Structural analysis of Arabidopsis thaliana chromosome 5. VI. Sequence features of the regions of 1,367,185 bp covered by 19 physically assigned P1 and TAC clones.</title>
        <authorList>
            <person name="Kotani H."/>
            <person name="Nakamura Y."/>
            <person name="Sato S."/>
            <person name="Asamizu E."/>
            <person name="Kaneko T."/>
            <person name="Miyajima N."/>
            <person name="Tabata S."/>
        </authorList>
    </citation>
    <scope>NUCLEOTIDE SEQUENCE [LARGE SCALE GENOMIC DNA]</scope>
    <source>
        <strain>cv. Columbia</strain>
    </source>
</reference>
<reference key="2">
    <citation type="journal article" date="2017" name="Plant J.">
        <title>Araport11: a complete reannotation of the Arabidopsis thaliana reference genome.</title>
        <authorList>
            <person name="Cheng C.Y."/>
            <person name="Krishnakumar V."/>
            <person name="Chan A.P."/>
            <person name="Thibaud-Nissen F."/>
            <person name="Schobel S."/>
            <person name="Town C.D."/>
        </authorList>
    </citation>
    <scope>GENOME REANNOTATION</scope>
    <source>
        <strain>cv. Columbia</strain>
    </source>
</reference>
<protein>
    <recommendedName>
        <fullName>Putative F-box/FBD/LRR-repeat protein At5g56810</fullName>
    </recommendedName>
</protein>
<accession>Q9FJT2</accession>
<name>FDL40_ARATH</name>
<organism>
    <name type="scientific">Arabidopsis thaliana</name>
    <name type="common">Mouse-ear cress</name>
    <dbReference type="NCBI Taxonomy" id="3702"/>
    <lineage>
        <taxon>Eukaryota</taxon>
        <taxon>Viridiplantae</taxon>
        <taxon>Streptophyta</taxon>
        <taxon>Embryophyta</taxon>
        <taxon>Tracheophyta</taxon>
        <taxon>Spermatophyta</taxon>
        <taxon>Magnoliopsida</taxon>
        <taxon>eudicotyledons</taxon>
        <taxon>Gunneridae</taxon>
        <taxon>Pentapetalae</taxon>
        <taxon>rosids</taxon>
        <taxon>malvids</taxon>
        <taxon>Brassicales</taxon>
        <taxon>Brassicaceae</taxon>
        <taxon>Camelineae</taxon>
        <taxon>Arabidopsis</taxon>
    </lineage>
</organism>
<feature type="chain" id="PRO_0000283132" description="Putative F-box/FBD/LRR-repeat protein At5g56810">
    <location>
        <begin position="1"/>
        <end position="435"/>
    </location>
</feature>
<feature type="domain" description="F-box" evidence="1">
    <location>
        <begin position="14"/>
        <end position="62"/>
    </location>
</feature>
<feature type="repeat" description="LRR 1">
    <location>
        <begin position="64"/>
        <end position="95"/>
    </location>
</feature>
<feature type="repeat" description="LRR 2">
    <location>
        <begin position="146"/>
        <end position="173"/>
    </location>
</feature>
<feature type="repeat" description="LRR 3">
    <location>
        <begin position="174"/>
        <end position="199"/>
    </location>
</feature>
<feature type="repeat" description="LRR 4">
    <location>
        <begin position="222"/>
        <end position="248"/>
    </location>
</feature>
<feature type="repeat" description="LRR 5">
    <location>
        <begin position="266"/>
        <end position="291"/>
    </location>
</feature>
<feature type="repeat" description="LRR 6">
    <location>
        <begin position="316"/>
        <end position="341"/>
    </location>
</feature>
<feature type="domain" description="FBD">
    <location>
        <begin position="353"/>
        <end position="404"/>
    </location>
</feature>